<reference key="1">
    <citation type="journal article" date="2011" name="Stand. Genomic Sci.">
        <title>Complete genome sequence of the halophilic and highly halotolerant Chromohalobacter salexigens type strain (1H11(T)).</title>
        <authorList>
            <person name="Copeland A."/>
            <person name="O'Connor K."/>
            <person name="Lucas S."/>
            <person name="Lapidus A."/>
            <person name="Berry K.W."/>
            <person name="Detter J.C."/>
            <person name="Del Rio T.G."/>
            <person name="Hammon N."/>
            <person name="Dalin E."/>
            <person name="Tice H."/>
            <person name="Pitluck S."/>
            <person name="Bruce D."/>
            <person name="Goodwin L."/>
            <person name="Han C."/>
            <person name="Tapia R."/>
            <person name="Saunders E."/>
            <person name="Schmutz J."/>
            <person name="Brettin T."/>
            <person name="Larimer F."/>
            <person name="Land M."/>
            <person name="Hauser L."/>
            <person name="Vargas C."/>
            <person name="Nieto J.J."/>
            <person name="Kyrpides N.C."/>
            <person name="Ivanova N."/>
            <person name="Goker M."/>
            <person name="Klenk H.P."/>
            <person name="Csonka L.N."/>
            <person name="Woyke T."/>
        </authorList>
    </citation>
    <scope>NUCLEOTIDE SEQUENCE [LARGE SCALE GENOMIC DNA]</scope>
    <source>
        <strain>ATCC BAA-138 / DSM 3043 / CIP 106854 / NCIMB 13768 / 1H11</strain>
    </source>
</reference>
<name>PUR5_CHRSD</name>
<keyword id="KW-0067">ATP-binding</keyword>
<keyword id="KW-0963">Cytoplasm</keyword>
<keyword id="KW-0436">Ligase</keyword>
<keyword id="KW-0547">Nucleotide-binding</keyword>
<keyword id="KW-0658">Purine biosynthesis</keyword>
<keyword id="KW-1185">Reference proteome</keyword>
<evidence type="ECO:0000255" key="1">
    <source>
        <dbReference type="HAMAP-Rule" id="MF_00741"/>
    </source>
</evidence>
<feature type="chain" id="PRO_0000258346" description="Phosphoribosylformylglycinamidine cyclo-ligase">
    <location>
        <begin position="1"/>
        <end position="358"/>
    </location>
</feature>
<protein>
    <recommendedName>
        <fullName evidence="1">Phosphoribosylformylglycinamidine cyclo-ligase</fullName>
        <ecNumber evidence="1">6.3.3.1</ecNumber>
    </recommendedName>
    <alternativeName>
        <fullName evidence="1">AIR synthase</fullName>
    </alternativeName>
    <alternativeName>
        <fullName evidence="1">AIRS</fullName>
    </alternativeName>
    <alternativeName>
        <fullName evidence="1">Phosphoribosyl-aminoimidazole synthetase</fullName>
    </alternativeName>
</protein>
<proteinExistence type="inferred from homology"/>
<organism>
    <name type="scientific">Chromohalobacter salexigens (strain ATCC BAA-138 / DSM 3043 / CIP 106854 / NCIMB 13768 / 1H11)</name>
    <dbReference type="NCBI Taxonomy" id="290398"/>
    <lineage>
        <taxon>Bacteria</taxon>
        <taxon>Pseudomonadati</taxon>
        <taxon>Pseudomonadota</taxon>
        <taxon>Gammaproteobacteria</taxon>
        <taxon>Oceanospirillales</taxon>
        <taxon>Halomonadaceae</taxon>
        <taxon>Chromohalobacter</taxon>
    </lineage>
</organism>
<sequence>MTRSSDTPSSSRASLSYKDAGVDIDAGNALVERIKGVAKRTSRPEVMGGLGGFGALCQLPTGYREPVLVSGTDGVGTKLRLAMDLARHDTIGIDLVAMCVNDLVVAGAEPLFFLDYYATGKLDVDIAADVVTGIGEGCAQAGCALIGGETAEMPGMYAGSDYDLAGFCVGVVEKSEILDGSRVAEGDVLLGLASSGPHSNGYSLIRKIIERGQADLEQEIDGIPLRDALLAPTRIYVKSLLSLIKESDVTVHALSHITGGGLLENVPRVLPDTLAARIDAASWTRPAVFDWLQREGNVDEHEMHRVLNCGIGMVVVVPAAQAERAQAALEAAGETVHRLGEIVPRQDEEEQVRLENVR</sequence>
<comment type="catalytic activity">
    <reaction evidence="1">
        <text>2-formamido-N(1)-(5-O-phospho-beta-D-ribosyl)acetamidine + ATP = 5-amino-1-(5-phospho-beta-D-ribosyl)imidazole + ADP + phosphate + H(+)</text>
        <dbReference type="Rhea" id="RHEA:23032"/>
        <dbReference type="ChEBI" id="CHEBI:15378"/>
        <dbReference type="ChEBI" id="CHEBI:30616"/>
        <dbReference type="ChEBI" id="CHEBI:43474"/>
        <dbReference type="ChEBI" id="CHEBI:137981"/>
        <dbReference type="ChEBI" id="CHEBI:147287"/>
        <dbReference type="ChEBI" id="CHEBI:456216"/>
        <dbReference type="EC" id="6.3.3.1"/>
    </reaction>
</comment>
<comment type="pathway">
    <text evidence="1">Purine metabolism; IMP biosynthesis via de novo pathway; 5-amino-1-(5-phospho-D-ribosyl)imidazole from N(2)-formyl-N(1)-(5-phospho-D-ribosyl)glycinamide: step 2/2.</text>
</comment>
<comment type="subcellular location">
    <subcellularLocation>
        <location evidence="1">Cytoplasm</location>
    </subcellularLocation>
</comment>
<comment type="similarity">
    <text evidence="1">Belongs to the AIR synthase family.</text>
</comment>
<accession>Q1QVP5</accession>
<dbReference type="EC" id="6.3.3.1" evidence="1"/>
<dbReference type="EMBL" id="CP000285">
    <property type="protein sequence ID" value="ABE59463.1"/>
    <property type="molecule type" value="Genomic_DNA"/>
</dbReference>
<dbReference type="RefSeq" id="WP_011507409.1">
    <property type="nucleotide sequence ID" value="NC_007963.1"/>
</dbReference>
<dbReference type="SMR" id="Q1QVP5"/>
<dbReference type="STRING" id="290398.Csal_2112"/>
<dbReference type="GeneID" id="95334829"/>
<dbReference type="KEGG" id="csa:Csal_2112"/>
<dbReference type="eggNOG" id="COG0150">
    <property type="taxonomic scope" value="Bacteria"/>
</dbReference>
<dbReference type="HOGENOM" id="CLU_047116_0_0_6"/>
<dbReference type="OrthoDB" id="9777881at2"/>
<dbReference type="UniPathway" id="UPA00074">
    <property type="reaction ID" value="UER00129"/>
</dbReference>
<dbReference type="Proteomes" id="UP000000239">
    <property type="component" value="Chromosome"/>
</dbReference>
<dbReference type="GO" id="GO:0005829">
    <property type="term" value="C:cytosol"/>
    <property type="evidence" value="ECO:0007669"/>
    <property type="project" value="TreeGrafter"/>
</dbReference>
<dbReference type="GO" id="GO:0005524">
    <property type="term" value="F:ATP binding"/>
    <property type="evidence" value="ECO:0007669"/>
    <property type="project" value="UniProtKB-KW"/>
</dbReference>
<dbReference type="GO" id="GO:0004637">
    <property type="term" value="F:phosphoribosylamine-glycine ligase activity"/>
    <property type="evidence" value="ECO:0007669"/>
    <property type="project" value="TreeGrafter"/>
</dbReference>
<dbReference type="GO" id="GO:0004641">
    <property type="term" value="F:phosphoribosylformylglycinamidine cyclo-ligase activity"/>
    <property type="evidence" value="ECO:0007669"/>
    <property type="project" value="UniProtKB-UniRule"/>
</dbReference>
<dbReference type="GO" id="GO:0006189">
    <property type="term" value="P:'de novo' IMP biosynthetic process"/>
    <property type="evidence" value="ECO:0007669"/>
    <property type="project" value="UniProtKB-UniRule"/>
</dbReference>
<dbReference type="GO" id="GO:0046084">
    <property type="term" value="P:adenine biosynthetic process"/>
    <property type="evidence" value="ECO:0007669"/>
    <property type="project" value="TreeGrafter"/>
</dbReference>
<dbReference type="CDD" id="cd02196">
    <property type="entry name" value="PurM"/>
    <property type="match status" value="1"/>
</dbReference>
<dbReference type="FunFam" id="3.30.1330.10:FF:000001">
    <property type="entry name" value="Phosphoribosylformylglycinamidine cyclo-ligase"/>
    <property type="match status" value="1"/>
</dbReference>
<dbReference type="FunFam" id="3.90.650.10:FF:000001">
    <property type="entry name" value="Phosphoribosylformylglycinamidine cyclo-ligase"/>
    <property type="match status" value="1"/>
</dbReference>
<dbReference type="Gene3D" id="3.90.650.10">
    <property type="entry name" value="PurM-like C-terminal domain"/>
    <property type="match status" value="1"/>
</dbReference>
<dbReference type="Gene3D" id="3.30.1330.10">
    <property type="entry name" value="PurM-like, N-terminal domain"/>
    <property type="match status" value="1"/>
</dbReference>
<dbReference type="HAMAP" id="MF_00741">
    <property type="entry name" value="AIRS"/>
    <property type="match status" value="1"/>
</dbReference>
<dbReference type="InterPro" id="IPR010918">
    <property type="entry name" value="PurM-like_C_dom"/>
</dbReference>
<dbReference type="InterPro" id="IPR036676">
    <property type="entry name" value="PurM-like_C_sf"/>
</dbReference>
<dbReference type="InterPro" id="IPR016188">
    <property type="entry name" value="PurM-like_N"/>
</dbReference>
<dbReference type="InterPro" id="IPR036921">
    <property type="entry name" value="PurM-like_N_sf"/>
</dbReference>
<dbReference type="InterPro" id="IPR004733">
    <property type="entry name" value="PurM_cligase"/>
</dbReference>
<dbReference type="NCBIfam" id="TIGR00878">
    <property type="entry name" value="purM"/>
    <property type="match status" value="1"/>
</dbReference>
<dbReference type="PANTHER" id="PTHR10520:SF12">
    <property type="entry name" value="TRIFUNCTIONAL PURINE BIOSYNTHETIC PROTEIN ADENOSINE-3"/>
    <property type="match status" value="1"/>
</dbReference>
<dbReference type="PANTHER" id="PTHR10520">
    <property type="entry name" value="TRIFUNCTIONAL PURINE BIOSYNTHETIC PROTEIN ADENOSINE-3-RELATED"/>
    <property type="match status" value="1"/>
</dbReference>
<dbReference type="Pfam" id="PF00586">
    <property type="entry name" value="AIRS"/>
    <property type="match status" value="1"/>
</dbReference>
<dbReference type="Pfam" id="PF02769">
    <property type="entry name" value="AIRS_C"/>
    <property type="match status" value="1"/>
</dbReference>
<dbReference type="SUPFAM" id="SSF56042">
    <property type="entry name" value="PurM C-terminal domain-like"/>
    <property type="match status" value="1"/>
</dbReference>
<dbReference type="SUPFAM" id="SSF55326">
    <property type="entry name" value="PurM N-terminal domain-like"/>
    <property type="match status" value="1"/>
</dbReference>
<gene>
    <name evidence="1" type="primary">purM</name>
    <name type="ordered locus">Csal_2112</name>
</gene>